<reference key="1">
    <citation type="journal article" date="2001" name="Science">
        <title>Mechanisms of evolution in Rickettsia conorii and R. prowazekii.</title>
        <authorList>
            <person name="Ogata H."/>
            <person name="Audic S."/>
            <person name="Renesto-Audiffren P."/>
            <person name="Fournier P.-E."/>
            <person name="Barbe V."/>
            <person name="Samson D."/>
            <person name="Roux V."/>
            <person name="Cossart P."/>
            <person name="Weissenbach J."/>
            <person name="Claverie J.-M."/>
            <person name="Raoult D."/>
        </authorList>
    </citation>
    <scope>NUCLEOTIDE SEQUENCE [LARGE SCALE GENOMIC DNA]</scope>
    <source>
        <strain>ATCC VR-613 / Malish 7</strain>
    </source>
</reference>
<protein>
    <recommendedName>
        <fullName>Pyruvate dehydrogenase E1 component subunit beta</fullName>
        <ecNumber>1.2.4.1</ecNumber>
    </recommendedName>
</protein>
<gene>
    <name type="primary">pdhB</name>
    <name type="ordered locus">RC0348</name>
</gene>
<name>ODPB_RICCN</name>
<proteinExistence type="inferred from homology"/>
<comment type="function">
    <text evidence="1">The pyruvate dehydrogenase complex catalyzes the overall conversion of pyruvate to acetyl-CoA and CO(2). It contains multiple copies of three enzymatic components: pyruvate dehydrogenase (E1), dihydrolipoamide acetyltransferase (E2) and lipoamide dehydrogenase (E3) (By similarity).</text>
</comment>
<comment type="catalytic activity">
    <reaction>
        <text>N(6)-[(R)-lipoyl]-L-lysyl-[protein] + pyruvate + H(+) = N(6)-[(R)-S(8)-acetyldihydrolipoyl]-L-lysyl-[protein] + CO2</text>
        <dbReference type="Rhea" id="RHEA:19189"/>
        <dbReference type="Rhea" id="RHEA-COMP:10474"/>
        <dbReference type="Rhea" id="RHEA-COMP:10478"/>
        <dbReference type="ChEBI" id="CHEBI:15361"/>
        <dbReference type="ChEBI" id="CHEBI:15378"/>
        <dbReference type="ChEBI" id="CHEBI:16526"/>
        <dbReference type="ChEBI" id="CHEBI:83099"/>
        <dbReference type="ChEBI" id="CHEBI:83111"/>
        <dbReference type="EC" id="1.2.4.1"/>
    </reaction>
</comment>
<comment type="cofactor">
    <cofactor evidence="1">
        <name>thiamine diphosphate</name>
        <dbReference type="ChEBI" id="CHEBI:58937"/>
    </cofactor>
</comment>
<comment type="subunit">
    <text>Heterodimer of an alpha and a beta chain.</text>
</comment>
<dbReference type="EC" id="1.2.4.1"/>
<dbReference type="EMBL" id="AE006914">
    <property type="protein sequence ID" value="AAL02886.1"/>
    <property type="molecule type" value="Genomic_DNA"/>
</dbReference>
<dbReference type="PIR" id="D97743">
    <property type="entry name" value="D97743"/>
</dbReference>
<dbReference type="RefSeq" id="WP_010977003.1">
    <property type="nucleotide sequence ID" value="NC_003103.1"/>
</dbReference>
<dbReference type="SMR" id="Q92IS2"/>
<dbReference type="GeneID" id="928543"/>
<dbReference type="KEGG" id="rco:RC0348"/>
<dbReference type="PATRIC" id="fig|272944.4.peg.396"/>
<dbReference type="HOGENOM" id="CLU_012907_1_1_5"/>
<dbReference type="Proteomes" id="UP000000816">
    <property type="component" value="Chromosome"/>
</dbReference>
<dbReference type="GO" id="GO:0004739">
    <property type="term" value="F:pyruvate dehydrogenase (acetyl-transferring) activity"/>
    <property type="evidence" value="ECO:0007669"/>
    <property type="project" value="UniProtKB-EC"/>
</dbReference>
<dbReference type="CDD" id="cd07036">
    <property type="entry name" value="TPP_PYR_E1-PDHc-beta_like"/>
    <property type="match status" value="1"/>
</dbReference>
<dbReference type="FunFam" id="3.40.50.920:FF:000001">
    <property type="entry name" value="Pyruvate dehydrogenase E1 beta subunit"/>
    <property type="match status" value="1"/>
</dbReference>
<dbReference type="FunFam" id="3.40.50.970:FF:000001">
    <property type="entry name" value="Pyruvate dehydrogenase E1 beta subunit"/>
    <property type="match status" value="1"/>
</dbReference>
<dbReference type="Gene3D" id="3.40.50.920">
    <property type="match status" value="1"/>
</dbReference>
<dbReference type="Gene3D" id="3.40.50.970">
    <property type="match status" value="1"/>
</dbReference>
<dbReference type="InterPro" id="IPR029061">
    <property type="entry name" value="THDP-binding"/>
</dbReference>
<dbReference type="InterPro" id="IPR009014">
    <property type="entry name" value="Transketo_C/PFOR_II"/>
</dbReference>
<dbReference type="InterPro" id="IPR005475">
    <property type="entry name" value="Transketolase-like_Pyr-bd"/>
</dbReference>
<dbReference type="InterPro" id="IPR033248">
    <property type="entry name" value="Transketolase_C"/>
</dbReference>
<dbReference type="NCBIfam" id="NF006667">
    <property type="entry name" value="PRK09212.1"/>
    <property type="match status" value="1"/>
</dbReference>
<dbReference type="NCBIfam" id="NF008854">
    <property type="entry name" value="PRK11892.1"/>
    <property type="match status" value="1"/>
</dbReference>
<dbReference type="PANTHER" id="PTHR43257">
    <property type="entry name" value="PYRUVATE DEHYDROGENASE E1 COMPONENT BETA SUBUNIT"/>
    <property type="match status" value="1"/>
</dbReference>
<dbReference type="PANTHER" id="PTHR43257:SF2">
    <property type="entry name" value="PYRUVATE DEHYDROGENASE E1 COMPONENT SUBUNIT BETA"/>
    <property type="match status" value="1"/>
</dbReference>
<dbReference type="Pfam" id="PF02779">
    <property type="entry name" value="Transket_pyr"/>
    <property type="match status" value="1"/>
</dbReference>
<dbReference type="Pfam" id="PF02780">
    <property type="entry name" value="Transketolase_C"/>
    <property type="match status" value="1"/>
</dbReference>
<dbReference type="SMART" id="SM00861">
    <property type="entry name" value="Transket_pyr"/>
    <property type="match status" value="1"/>
</dbReference>
<dbReference type="SUPFAM" id="SSF52518">
    <property type="entry name" value="Thiamin diphosphate-binding fold (THDP-binding)"/>
    <property type="match status" value="1"/>
</dbReference>
<dbReference type="SUPFAM" id="SSF52922">
    <property type="entry name" value="TK C-terminal domain-like"/>
    <property type="match status" value="1"/>
</dbReference>
<sequence length="326" mass="35821">MQITVREALRDAMQEEMIRDDKVFVIGEEVAEYQGAYKVTQGLLEQFGPKRVIDTPITEYGFAGLAVGAAFAGLRPIVEFMTFNFAMQAFDHIVNSAAKTHYMSGGQVKCPIVFRGPNGAASRVAAQHSQNYTACYSHIPGLKVVAPYSAEDHKGLMLTAIRDDNPVVFLENEILYGHSFDVPKTIEPIPFGQAKILREGSSVTIVTFSIQVKLALDAANFVQNDNIDCEVIDLRTIKPLDTETIIESVKKTNRLVVVEEGWFFAGVGASIASIVMKEAFDYLDAPIEIVSGKDLPLPYAVNLETLALPSESDVIEAVKKVCYYSI</sequence>
<accession>Q92IS2</accession>
<feature type="chain" id="PRO_0000162226" description="Pyruvate dehydrogenase E1 component subunit beta">
    <location>
        <begin position="1"/>
        <end position="326"/>
    </location>
</feature>
<feature type="binding site" evidence="1">
    <location>
        <position position="59"/>
    </location>
    <ligand>
        <name>thiamine diphosphate</name>
        <dbReference type="ChEBI" id="CHEBI:58937"/>
    </ligand>
</feature>
<organism>
    <name type="scientific">Rickettsia conorii (strain ATCC VR-613 / Malish 7)</name>
    <dbReference type="NCBI Taxonomy" id="272944"/>
    <lineage>
        <taxon>Bacteria</taxon>
        <taxon>Pseudomonadati</taxon>
        <taxon>Pseudomonadota</taxon>
        <taxon>Alphaproteobacteria</taxon>
        <taxon>Rickettsiales</taxon>
        <taxon>Rickettsiaceae</taxon>
        <taxon>Rickettsieae</taxon>
        <taxon>Rickettsia</taxon>
        <taxon>spotted fever group</taxon>
    </lineage>
</organism>
<keyword id="KW-0560">Oxidoreductase</keyword>
<keyword id="KW-0670">Pyruvate</keyword>
<keyword id="KW-0786">Thiamine pyrophosphate</keyword>
<evidence type="ECO:0000250" key="1"/>